<gene>
    <name evidence="1" type="primary">ihfB</name>
    <name evidence="1" type="synonym">himD</name>
    <name type="ordered locus">Rmet_0723</name>
</gene>
<evidence type="ECO:0000255" key="1">
    <source>
        <dbReference type="HAMAP-Rule" id="MF_00381"/>
    </source>
</evidence>
<evidence type="ECO:0000256" key="2">
    <source>
        <dbReference type="SAM" id="MobiDB-lite"/>
    </source>
</evidence>
<dbReference type="EMBL" id="CP000352">
    <property type="protein sequence ID" value="ABF07609.1"/>
    <property type="molecule type" value="Genomic_DNA"/>
</dbReference>
<dbReference type="RefSeq" id="WP_011515571.1">
    <property type="nucleotide sequence ID" value="NC_007973.1"/>
</dbReference>
<dbReference type="SMR" id="Q1LQG7"/>
<dbReference type="STRING" id="266264.Rmet_0723"/>
<dbReference type="KEGG" id="rme:Rmet_0723"/>
<dbReference type="eggNOG" id="COG0776">
    <property type="taxonomic scope" value="Bacteria"/>
</dbReference>
<dbReference type="HOGENOM" id="CLU_105066_2_0_4"/>
<dbReference type="Proteomes" id="UP000002429">
    <property type="component" value="Chromosome"/>
</dbReference>
<dbReference type="GO" id="GO:0005694">
    <property type="term" value="C:chromosome"/>
    <property type="evidence" value="ECO:0007669"/>
    <property type="project" value="InterPro"/>
</dbReference>
<dbReference type="GO" id="GO:0005829">
    <property type="term" value="C:cytosol"/>
    <property type="evidence" value="ECO:0007669"/>
    <property type="project" value="TreeGrafter"/>
</dbReference>
<dbReference type="GO" id="GO:0003677">
    <property type="term" value="F:DNA binding"/>
    <property type="evidence" value="ECO:0007669"/>
    <property type="project" value="UniProtKB-UniRule"/>
</dbReference>
<dbReference type="GO" id="GO:0030527">
    <property type="term" value="F:structural constituent of chromatin"/>
    <property type="evidence" value="ECO:0007669"/>
    <property type="project" value="InterPro"/>
</dbReference>
<dbReference type="GO" id="GO:0006310">
    <property type="term" value="P:DNA recombination"/>
    <property type="evidence" value="ECO:0007669"/>
    <property type="project" value="UniProtKB-UniRule"/>
</dbReference>
<dbReference type="GO" id="GO:0006355">
    <property type="term" value="P:regulation of DNA-templated transcription"/>
    <property type="evidence" value="ECO:0007669"/>
    <property type="project" value="UniProtKB-UniRule"/>
</dbReference>
<dbReference type="GO" id="GO:0006417">
    <property type="term" value="P:regulation of translation"/>
    <property type="evidence" value="ECO:0007669"/>
    <property type="project" value="UniProtKB-UniRule"/>
</dbReference>
<dbReference type="CDD" id="cd13836">
    <property type="entry name" value="IHF_B"/>
    <property type="match status" value="1"/>
</dbReference>
<dbReference type="Gene3D" id="4.10.520.10">
    <property type="entry name" value="IHF-like DNA-binding proteins"/>
    <property type="match status" value="1"/>
</dbReference>
<dbReference type="HAMAP" id="MF_00381">
    <property type="entry name" value="IHF_beta"/>
    <property type="match status" value="1"/>
</dbReference>
<dbReference type="InterPro" id="IPR000119">
    <property type="entry name" value="Hist_DNA-bd"/>
</dbReference>
<dbReference type="InterPro" id="IPR010992">
    <property type="entry name" value="IHF-like_DNA-bd_dom_sf"/>
</dbReference>
<dbReference type="InterPro" id="IPR005685">
    <property type="entry name" value="IHF_beta"/>
</dbReference>
<dbReference type="NCBIfam" id="TIGR00988">
    <property type="entry name" value="hip"/>
    <property type="match status" value="1"/>
</dbReference>
<dbReference type="NCBIfam" id="NF001222">
    <property type="entry name" value="PRK00199.1"/>
    <property type="match status" value="1"/>
</dbReference>
<dbReference type="PANTHER" id="PTHR33175">
    <property type="entry name" value="DNA-BINDING PROTEIN HU"/>
    <property type="match status" value="1"/>
</dbReference>
<dbReference type="PANTHER" id="PTHR33175:SF5">
    <property type="entry name" value="INTEGRATION HOST FACTOR SUBUNIT BETA"/>
    <property type="match status" value="1"/>
</dbReference>
<dbReference type="Pfam" id="PF00216">
    <property type="entry name" value="Bac_DNA_binding"/>
    <property type="match status" value="1"/>
</dbReference>
<dbReference type="PRINTS" id="PR01727">
    <property type="entry name" value="DNABINDINGHU"/>
</dbReference>
<dbReference type="SMART" id="SM00411">
    <property type="entry name" value="BHL"/>
    <property type="match status" value="1"/>
</dbReference>
<dbReference type="SUPFAM" id="SSF47729">
    <property type="entry name" value="IHF-like DNA-binding proteins"/>
    <property type="match status" value="1"/>
</dbReference>
<proteinExistence type="inferred from homology"/>
<accession>Q1LQG7</accession>
<name>IHFB_CUPMC</name>
<protein>
    <recommendedName>
        <fullName evidence="1">Integration host factor subunit beta</fullName>
        <shortName evidence="1">IHF-beta</shortName>
    </recommendedName>
</protein>
<feature type="chain" id="PRO_1000122229" description="Integration host factor subunit beta">
    <location>
        <begin position="1"/>
        <end position="135"/>
    </location>
</feature>
<feature type="region of interest" description="Disordered" evidence="2">
    <location>
        <begin position="83"/>
        <end position="135"/>
    </location>
</feature>
<feature type="compositionally biased region" description="Basic and acidic residues" evidence="2">
    <location>
        <begin position="83"/>
        <end position="92"/>
    </location>
</feature>
<feature type="compositionally biased region" description="Polar residues" evidence="2">
    <location>
        <begin position="111"/>
        <end position="122"/>
    </location>
</feature>
<comment type="function">
    <text evidence="1">This protein is one of the two subunits of integration host factor, a specific DNA-binding protein that functions in genetic recombination as well as in transcriptional and translational control.</text>
</comment>
<comment type="subunit">
    <text evidence="1">Heterodimer of an alpha and a beta chain.</text>
</comment>
<comment type="similarity">
    <text evidence="1">Belongs to the bacterial histone-like protein family.</text>
</comment>
<organism>
    <name type="scientific">Cupriavidus metallidurans (strain ATCC 43123 / DSM 2839 / NBRC 102507 / CH34)</name>
    <name type="common">Ralstonia metallidurans</name>
    <dbReference type="NCBI Taxonomy" id="266264"/>
    <lineage>
        <taxon>Bacteria</taxon>
        <taxon>Pseudomonadati</taxon>
        <taxon>Pseudomonadota</taxon>
        <taxon>Betaproteobacteria</taxon>
        <taxon>Burkholderiales</taxon>
        <taxon>Burkholderiaceae</taxon>
        <taxon>Cupriavidus</taxon>
    </lineage>
</organism>
<reference key="1">
    <citation type="journal article" date="2010" name="PLoS ONE">
        <title>The complete genome sequence of Cupriavidus metallidurans strain CH34, a master survivalist in harsh and anthropogenic environments.</title>
        <authorList>
            <person name="Janssen P.J."/>
            <person name="Van Houdt R."/>
            <person name="Moors H."/>
            <person name="Monsieurs P."/>
            <person name="Morin N."/>
            <person name="Michaux A."/>
            <person name="Benotmane M.A."/>
            <person name="Leys N."/>
            <person name="Vallaeys T."/>
            <person name="Lapidus A."/>
            <person name="Monchy S."/>
            <person name="Medigue C."/>
            <person name="Taghavi S."/>
            <person name="McCorkle S."/>
            <person name="Dunn J."/>
            <person name="van der Lelie D."/>
            <person name="Mergeay M."/>
        </authorList>
    </citation>
    <scope>NUCLEOTIDE SEQUENCE [LARGE SCALE GENOMIC DNA]</scope>
    <source>
        <strain>ATCC 43123 / DSM 2839 / NBRC 102507 / CH34</strain>
    </source>
</reference>
<keyword id="KW-0233">DNA recombination</keyword>
<keyword id="KW-0238">DNA-binding</keyword>
<keyword id="KW-1185">Reference proteome</keyword>
<keyword id="KW-0804">Transcription</keyword>
<keyword id="KW-0805">Transcription regulation</keyword>
<keyword id="KW-0810">Translation regulation</keyword>
<sequence>MTKSELVEKLAARFPQLLLRDADISVKTILDAMSEALADGHRIEIRGFGSFGLNKRPPRVGRNPKSGERVLVPEKRVPHFKAGKELRERVDRTVTQGGGMNGNGHAPHGKTGQSQLGSQSPASLHDDGQLNLVRS</sequence>